<sequence>MATVIDRHSQPTWRDFLELTKPKVVVLMLITSLIGMLLATKAPLDGFVPWQVLIFGNLGIGLCAGAAAAVNHVVDRRIDSIMARTHKRPLAEGRVSPSMALGFALLLALAGMAVLLAFTNPLTAWLTLASLLGYAALYTGFLKRATPQNIVIGGLAGAAPPLLGWVAITGHLSAEPLLLVLIIFAWTPPHFWALCIHRKDEYAKADIPMLPVTHGERYTKLHILLYTLVLFAVSLMPFVIHMSGLVYLLCALALGARFLDWAWALYCDSRPHAAIKTFKYSIVYLFLLFMALLVDHYLPLKLLL</sequence>
<name>CYOE1_PSEAB</name>
<reference key="1">
    <citation type="journal article" date="2006" name="Genome Biol.">
        <title>Genomic analysis reveals that Pseudomonas aeruginosa virulence is combinatorial.</title>
        <authorList>
            <person name="Lee D.G."/>
            <person name="Urbach J.M."/>
            <person name="Wu G."/>
            <person name="Liberati N.T."/>
            <person name="Feinbaum R.L."/>
            <person name="Miyata S."/>
            <person name="Diggins L.T."/>
            <person name="He J."/>
            <person name="Saucier M."/>
            <person name="Deziel E."/>
            <person name="Friedman L."/>
            <person name="Li L."/>
            <person name="Grills G."/>
            <person name="Montgomery K."/>
            <person name="Kucherlapati R."/>
            <person name="Rahme L.G."/>
            <person name="Ausubel F.M."/>
        </authorList>
    </citation>
    <scope>NUCLEOTIDE SEQUENCE [LARGE SCALE GENOMIC DNA]</scope>
    <source>
        <strain>UCBPP-PA14</strain>
    </source>
</reference>
<proteinExistence type="inferred from homology"/>
<keyword id="KW-0997">Cell inner membrane</keyword>
<keyword id="KW-1003">Cell membrane</keyword>
<keyword id="KW-0350">Heme biosynthesis</keyword>
<keyword id="KW-0472">Membrane</keyword>
<keyword id="KW-0808">Transferase</keyword>
<keyword id="KW-0812">Transmembrane</keyword>
<keyword id="KW-1133">Transmembrane helix</keyword>
<comment type="function">
    <text evidence="1">Converts heme B (protoheme IX) to heme O by substitution of the vinyl group on carbon 2 of heme B porphyrin ring with a hydroxyethyl farnesyl side group.</text>
</comment>
<comment type="catalytic activity">
    <reaction evidence="1">
        <text>heme b + (2E,6E)-farnesyl diphosphate + H2O = Fe(II)-heme o + diphosphate</text>
        <dbReference type="Rhea" id="RHEA:28070"/>
        <dbReference type="ChEBI" id="CHEBI:15377"/>
        <dbReference type="ChEBI" id="CHEBI:33019"/>
        <dbReference type="ChEBI" id="CHEBI:60344"/>
        <dbReference type="ChEBI" id="CHEBI:60530"/>
        <dbReference type="ChEBI" id="CHEBI:175763"/>
        <dbReference type="EC" id="2.5.1.141"/>
    </reaction>
</comment>
<comment type="pathway">
    <text evidence="1">Porphyrin-containing compound metabolism; heme O biosynthesis; heme O from protoheme: step 1/1.</text>
</comment>
<comment type="subcellular location">
    <subcellularLocation>
        <location evidence="1">Cell inner membrane</location>
        <topology evidence="1">Multi-pass membrane protein</topology>
    </subcellularLocation>
</comment>
<comment type="miscellaneous">
    <text evidence="1">Carbon 2 of the heme B porphyrin ring is defined according to the Fischer nomenclature.</text>
</comment>
<comment type="similarity">
    <text evidence="1">Belongs to the UbiA prenyltransferase family. Protoheme IX farnesyltransferase subfamily.</text>
</comment>
<gene>
    <name evidence="1" type="primary">cyoE1</name>
    <name type="ordered locus">PA14_01380</name>
</gene>
<evidence type="ECO:0000255" key="1">
    <source>
        <dbReference type="HAMAP-Rule" id="MF_00154"/>
    </source>
</evidence>
<protein>
    <recommendedName>
        <fullName evidence="1">Protoheme IX farnesyltransferase 1</fullName>
        <ecNumber evidence="1">2.5.1.141</ecNumber>
    </recommendedName>
    <alternativeName>
        <fullName evidence="1">Heme B farnesyltransferase 1</fullName>
    </alternativeName>
    <alternativeName>
        <fullName evidence="1">Heme O synthase 1</fullName>
    </alternativeName>
</protein>
<organism>
    <name type="scientific">Pseudomonas aeruginosa (strain UCBPP-PA14)</name>
    <dbReference type="NCBI Taxonomy" id="208963"/>
    <lineage>
        <taxon>Bacteria</taxon>
        <taxon>Pseudomonadati</taxon>
        <taxon>Pseudomonadota</taxon>
        <taxon>Gammaproteobacteria</taxon>
        <taxon>Pseudomonadales</taxon>
        <taxon>Pseudomonadaceae</taxon>
        <taxon>Pseudomonas</taxon>
    </lineage>
</organism>
<dbReference type="EC" id="2.5.1.141" evidence="1"/>
<dbReference type="EMBL" id="CP000438">
    <property type="protein sequence ID" value="ABJ15070.1"/>
    <property type="molecule type" value="Genomic_DNA"/>
</dbReference>
<dbReference type="SMR" id="Q02UW5"/>
<dbReference type="KEGG" id="pau:PA14_01380"/>
<dbReference type="PseudoCAP" id="PA14_01380"/>
<dbReference type="HOGENOM" id="CLU_029631_0_2_6"/>
<dbReference type="BioCyc" id="PAER208963:G1G74-118-MONOMER"/>
<dbReference type="UniPathway" id="UPA00834">
    <property type="reaction ID" value="UER00712"/>
</dbReference>
<dbReference type="Proteomes" id="UP000000653">
    <property type="component" value="Chromosome"/>
</dbReference>
<dbReference type="GO" id="GO:0005886">
    <property type="term" value="C:plasma membrane"/>
    <property type="evidence" value="ECO:0007669"/>
    <property type="project" value="UniProtKB-SubCell"/>
</dbReference>
<dbReference type="GO" id="GO:0008495">
    <property type="term" value="F:protoheme IX farnesyltransferase activity"/>
    <property type="evidence" value="ECO:0007669"/>
    <property type="project" value="UniProtKB-UniRule"/>
</dbReference>
<dbReference type="GO" id="GO:0048034">
    <property type="term" value="P:heme O biosynthetic process"/>
    <property type="evidence" value="ECO:0007669"/>
    <property type="project" value="UniProtKB-UniRule"/>
</dbReference>
<dbReference type="CDD" id="cd13957">
    <property type="entry name" value="PT_UbiA_Cox10"/>
    <property type="match status" value="1"/>
</dbReference>
<dbReference type="FunFam" id="1.10.357.140:FF:000001">
    <property type="entry name" value="Protoheme IX farnesyltransferase"/>
    <property type="match status" value="1"/>
</dbReference>
<dbReference type="Gene3D" id="1.10.357.140">
    <property type="entry name" value="UbiA prenyltransferase"/>
    <property type="match status" value="1"/>
</dbReference>
<dbReference type="HAMAP" id="MF_00154">
    <property type="entry name" value="CyoE_CtaB"/>
    <property type="match status" value="1"/>
</dbReference>
<dbReference type="InterPro" id="IPR006369">
    <property type="entry name" value="Protohaem_IX_farnesylTrfase"/>
</dbReference>
<dbReference type="InterPro" id="IPR000537">
    <property type="entry name" value="UbiA_prenyltransferase"/>
</dbReference>
<dbReference type="InterPro" id="IPR030470">
    <property type="entry name" value="UbiA_prenylTrfase_CS"/>
</dbReference>
<dbReference type="InterPro" id="IPR044878">
    <property type="entry name" value="UbiA_sf"/>
</dbReference>
<dbReference type="NCBIfam" id="TIGR01473">
    <property type="entry name" value="cyoE_ctaB"/>
    <property type="match status" value="1"/>
</dbReference>
<dbReference type="NCBIfam" id="NF003349">
    <property type="entry name" value="PRK04375.1-2"/>
    <property type="match status" value="1"/>
</dbReference>
<dbReference type="PANTHER" id="PTHR43448:SF7">
    <property type="entry name" value="4-HYDROXYBENZOATE SOLANESYLTRANSFERASE"/>
    <property type="match status" value="1"/>
</dbReference>
<dbReference type="PANTHER" id="PTHR43448">
    <property type="entry name" value="PROTOHEME IX FARNESYLTRANSFERASE, MITOCHONDRIAL"/>
    <property type="match status" value="1"/>
</dbReference>
<dbReference type="Pfam" id="PF01040">
    <property type="entry name" value="UbiA"/>
    <property type="match status" value="1"/>
</dbReference>
<dbReference type="PROSITE" id="PS00943">
    <property type="entry name" value="UBIA"/>
    <property type="match status" value="1"/>
</dbReference>
<feature type="chain" id="PRO_0000326919" description="Protoheme IX farnesyltransferase 1">
    <location>
        <begin position="1"/>
        <end position="304"/>
    </location>
</feature>
<feature type="transmembrane region" description="Helical" evidence="1">
    <location>
        <begin position="24"/>
        <end position="44"/>
    </location>
</feature>
<feature type="transmembrane region" description="Helical" evidence="1">
    <location>
        <begin position="47"/>
        <end position="67"/>
    </location>
</feature>
<feature type="transmembrane region" description="Helical" evidence="1">
    <location>
        <begin position="99"/>
        <end position="119"/>
    </location>
</feature>
<feature type="transmembrane region" description="Helical" evidence="1">
    <location>
        <begin position="122"/>
        <end position="142"/>
    </location>
</feature>
<feature type="transmembrane region" description="Helical" evidence="1">
    <location>
        <begin position="150"/>
        <end position="170"/>
    </location>
</feature>
<feature type="transmembrane region" description="Helical" evidence="1">
    <location>
        <begin position="176"/>
        <end position="196"/>
    </location>
</feature>
<feature type="transmembrane region" description="Helical" evidence="1">
    <location>
        <begin position="228"/>
        <end position="248"/>
    </location>
</feature>
<feature type="transmembrane region" description="Helical" evidence="1">
    <location>
        <begin position="280"/>
        <end position="300"/>
    </location>
</feature>
<accession>Q02UW5</accession>